<sequence length="245" mass="27841">MANDTHTDDLDELLDSALDDFKDLNLTQRNGGVKKEEGDKKETESLPSGVQGLGMGLPDMRSKKKGKKKIAKEDHVTEALDKLREQTRETVKGLESLSSKQQPTGSDDAMVEDWIKQFENLTGSNDLESIVDTMMQQLLSKDILHEPMKEIGARYPKWLEEHESSLNKEEFDRYSRQYELIKELNLVYENEPNNSTKIMEIMQKMQECGQPPSDIVQEMDPGFDFASLGQMSPDMLESSPNCCVM</sequence>
<comment type="function">
    <text evidence="3 4">Contributes to morphology determination of peroxisomes, but not to import of peroxisomal matrix proteins. Required for proper post-translational import and stabilization of peroxisomal membrane proteins (PMPs). Acts as a cytosolic import receptor for PMPs and delivers them to the docking factor PEX3 at the peroxisomal membrane for subsequent insertion into the membrane. Acts as a chaperone in stabilizing or maintaining PMPs in the lipid bilayer.</text>
</comment>
<comment type="subunit">
    <text evidence="1">Dimer. Interacts with PEX10 (via C-terminus) (By similarity).</text>
</comment>
<comment type="interaction">
    <interactant intactId="EBI-7933092">
        <id>Q94EI3</id>
    </interactant>
    <interactant intactId="EBI-7933055">
        <id>Q94FB9</id>
        <label>ABCD1</label>
    </interactant>
    <organismsDiffer>false</organismsDiffer>
    <experiments>2</experiments>
</comment>
<comment type="subcellular location">
    <subcellularLocation>
        <location evidence="3">Cytoplasm</location>
    </subcellularLocation>
    <subcellularLocation>
        <location evidence="1">Peroxisome membrane</location>
        <topology evidence="1">Lipid-anchor</topology>
    </subcellularLocation>
    <text>Predominantly cytoplasmic.</text>
</comment>
<comment type="tissue specificity">
    <text evidence="3">Expressed in roots, leaves, flowers, siliques and stems. Highest expression in roots and leaves.</text>
</comment>
<comment type="PTM">
    <text evidence="1">May be farnesylated.</text>
</comment>
<comment type="similarity">
    <text evidence="5">Belongs to the peroxin-19 family.</text>
</comment>
<comment type="caution">
    <text evidence="6">Like its mammalian and yeast counterparts, PEX19-2 might be farnesylated and interacting transiently with the peroxisome membrane. However, this post-translational modification has not been demonstrated and only a trace of PEX19 was found associated with the peroxisome (PubMed:16923726).</text>
</comment>
<comment type="sequence caution" evidence="5">
    <conflict type="erroneous gene model prediction">
        <sequence resource="EMBL-CDS" id="CAC01899"/>
    </conflict>
</comment>
<keyword id="KW-0963">Cytoplasm</keyword>
<keyword id="KW-0449">Lipoprotein</keyword>
<keyword id="KW-0472">Membrane</keyword>
<keyword id="KW-0488">Methylation</keyword>
<keyword id="KW-0576">Peroxisome</keyword>
<keyword id="KW-0962">Peroxisome biogenesis</keyword>
<keyword id="KW-0636">Prenylation</keyword>
<keyword id="KW-0653">Protein transport</keyword>
<keyword id="KW-1185">Reference proteome</keyword>
<keyword id="KW-0813">Transport</keyword>
<name>PE192_ARATH</name>
<proteinExistence type="evidence at protein level"/>
<accession>Q94EI3</accession>
<accession>Q9LF69</accession>
<reference key="1">
    <citation type="journal article" date="2000" name="Nature">
        <title>Sequence and analysis of chromosome 5 of the plant Arabidopsis thaliana.</title>
        <authorList>
            <person name="Tabata S."/>
            <person name="Kaneko T."/>
            <person name="Nakamura Y."/>
            <person name="Kotani H."/>
            <person name="Kato T."/>
            <person name="Asamizu E."/>
            <person name="Miyajima N."/>
            <person name="Sasamoto S."/>
            <person name="Kimura T."/>
            <person name="Hosouchi T."/>
            <person name="Kawashima K."/>
            <person name="Kohara M."/>
            <person name="Matsumoto M."/>
            <person name="Matsuno A."/>
            <person name="Muraki A."/>
            <person name="Nakayama S."/>
            <person name="Nakazaki N."/>
            <person name="Naruo K."/>
            <person name="Okumura S."/>
            <person name="Shinpo S."/>
            <person name="Takeuchi C."/>
            <person name="Wada T."/>
            <person name="Watanabe A."/>
            <person name="Yamada M."/>
            <person name="Yasuda M."/>
            <person name="Sato S."/>
            <person name="de la Bastide M."/>
            <person name="Huang E."/>
            <person name="Spiegel L."/>
            <person name="Gnoj L."/>
            <person name="O'Shaughnessy A."/>
            <person name="Preston R."/>
            <person name="Habermann K."/>
            <person name="Murray J."/>
            <person name="Johnson D."/>
            <person name="Rohlfing T."/>
            <person name="Nelson J."/>
            <person name="Stoneking T."/>
            <person name="Pepin K."/>
            <person name="Spieth J."/>
            <person name="Sekhon M."/>
            <person name="Armstrong J."/>
            <person name="Becker M."/>
            <person name="Belter E."/>
            <person name="Cordum H."/>
            <person name="Cordes M."/>
            <person name="Courtney L."/>
            <person name="Courtney W."/>
            <person name="Dante M."/>
            <person name="Du H."/>
            <person name="Edwards J."/>
            <person name="Fryman J."/>
            <person name="Haakensen B."/>
            <person name="Lamar E."/>
            <person name="Latreille P."/>
            <person name="Leonard S."/>
            <person name="Meyer R."/>
            <person name="Mulvaney E."/>
            <person name="Ozersky P."/>
            <person name="Riley A."/>
            <person name="Strowmatt C."/>
            <person name="Wagner-McPherson C."/>
            <person name="Wollam A."/>
            <person name="Yoakum M."/>
            <person name="Bell M."/>
            <person name="Dedhia N."/>
            <person name="Parnell L."/>
            <person name="Shah R."/>
            <person name="Rodriguez M."/>
            <person name="Hoon See L."/>
            <person name="Vil D."/>
            <person name="Baker J."/>
            <person name="Kirchoff K."/>
            <person name="Toth K."/>
            <person name="King L."/>
            <person name="Bahret A."/>
            <person name="Miller B."/>
            <person name="Marra M.A."/>
            <person name="Martienssen R."/>
            <person name="McCombie W.R."/>
            <person name="Wilson R.K."/>
            <person name="Murphy G."/>
            <person name="Bancroft I."/>
            <person name="Volckaert G."/>
            <person name="Wambutt R."/>
            <person name="Duesterhoeft A."/>
            <person name="Stiekema W."/>
            <person name="Pohl T."/>
            <person name="Entian K.-D."/>
            <person name="Terryn N."/>
            <person name="Hartley N."/>
            <person name="Bent E."/>
            <person name="Johnson S."/>
            <person name="Langham S.-A."/>
            <person name="McCullagh B."/>
            <person name="Robben J."/>
            <person name="Grymonprez B."/>
            <person name="Zimmermann W."/>
            <person name="Ramsperger U."/>
            <person name="Wedler H."/>
            <person name="Balke K."/>
            <person name="Wedler E."/>
            <person name="Peters S."/>
            <person name="van Staveren M."/>
            <person name="Dirkse W."/>
            <person name="Mooijman P."/>
            <person name="Klein Lankhorst R."/>
            <person name="Weitzenegger T."/>
            <person name="Bothe G."/>
            <person name="Rose M."/>
            <person name="Hauf J."/>
            <person name="Berneiser S."/>
            <person name="Hempel S."/>
            <person name="Feldpausch M."/>
            <person name="Lamberth S."/>
            <person name="Villarroel R."/>
            <person name="Gielen J."/>
            <person name="Ardiles W."/>
            <person name="Bents O."/>
            <person name="Lemcke K."/>
            <person name="Kolesov G."/>
            <person name="Mayer K.F.X."/>
            <person name="Rudd S."/>
            <person name="Schoof H."/>
            <person name="Schueller C."/>
            <person name="Zaccaria P."/>
            <person name="Mewes H.-W."/>
            <person name="Bevan M."/>
            <person name="Fransz P.F."/>
        </authorList>
    </citation>
    <scope>NUCLEOTIDE SEQUENCE [LARGE SCALE GENOMIC DNA]</scope>
    <source>
        <strain>cv. Columbia</strain>
    </source>
</reference>
<reference key="2">
    <citation type="journal article" date="2017" name="Plant J.">
        <title>Araport11: a complete reannotation of the Arabidopsis thaliana reference genome.</title>
        <authorList>
            <person name="Cheng C.Y."/>
            <person name="Krishnakumar V."/>
            <person name="Chan A.P."/>
            <person name="Thibaud-Nissen F."/>
            <person name="Schobel S."/>
            <person name="Town C.D."/>
        </authorList>
    </citation>
    <scope>GENOME REANNOTATION</scope>
    <source>
        <strain>cv. Columbia</strain>
    </source>
</reference>
<reference key="3">
    <citation type="journal article" date="2003" name="Science">
        <title>Empirical analysis of transcriptional activity in the Arabidopsis genome.</title>
        <authorList>
            <person name="Yamada K."/>
            <person name="Lim J."/>
            <person name="Dale J.M."/>
            <person name="Chen H."/>
            <person name="Shinn P."/>
            <person name="Palm C.J."/>
            <person name="Southwick A.M."/>
            <person name="Wu H.C."/>
            <person name="Kim C.J."/>
            <person name="Nguyen M."/>
            <person name="Pham P.K."/>
            <person name="Cheuk R.F."/>
            <person name="Karlin-Newmann G."/>
            <person name="Liu S.X."/>
            <person name="Lam B."/>
            <person name="Sakano H."/>
            <person name="Wu T."/>
            <person name="Yu G."/>
            <person name="Miranda M."/>
            <person name="Quach H.L."/>
            <person name="Tripp M."/>
            <person name="Chang C.H."/>
            <person name="Lee J.M."/>
            <person name="Toriumi M.J."/>
            <person name="Chan M.M."/>
            <person name="Tang C.C."/>
            <person name="Onodera C.S."/>
            <person name="Deng J.M."/>
            <person name="Akiyama K."/>
            <person name="Ansari Y."/>
            <person name="Arakawa T."/>
            <person name="Banh J."/>
            <person name="Banno F."/>
            <person name="Bowser L."/>
            <person name="Brooks S.Y."/>
            <person name="Carninci P."/>
            <person name="Chao Q."/>
            <person name="Choy N."/>
            <person name="Enju A."/>
            <person name="Goldsmith A.D."/>
            <person name="Gurjal M."/>
            <person name="Hansen N.F."/>
            <person name="Hayashizaki Y."/>
            <person name="Johnson-Hopson C."/>
            <person name="Hsuan V.W."/>
            <person name="Iida K."/>
            <person name="Karnes M."/>
            <person name="Khan S."/>
            <person name="Koesema E."/>
            <person name="Ishida J."/>
            <person name="Jiang P.X."/>
            <person name="Jones T."/>
            <person name="Kawai J."/>
            <person name="Kamiya A."/>
            <person name="Meyers C."/>
            <person name="Nakajima M."/>
            <person name="Narusaka M."/>
            <person name="Seki M."/>
            <person name="Sakurai T."/>
            <person name="Satou M."/>
            <person name="Tamse R."/>
            <person name="Vaysberg M."/>
            <person name="Wallender E.K."/>
            <person name="Wong C."/>
            <person name="Yamamura Y."/>
            <person name="Yuan S."/>
            <person name="Shinozaki K."/>
            <person name="Davis R.W."/>
            <person name="Theologis A."/>
            <person name="Ecker J.R."/>
        </authorList>
    </citation>
    <scope>NUCLEOTIDE SEQUENCE [LARGE SCALE MRNA]</scope>
    <source>
        <strain>cv. Columbia</strain>
    </source>
</reference>
<reference key="4">
    <citation type="journal article" date="2006" name="Mol. Membr. Biol.">
        <title>Arabidopsis PEX19 is a dimeric protein that binds the peroxin PEX10.</title>
        <authorList>
            <person name="Hadden D.A."/>
            <person name="Phillipson B.A."/>
            <person name="Johnston K.A."/>
            <person name="Brown L.A."/>
            <person name="Manfield I.W."/>
            <person name="El-Shami M."/>
            <person name="Sparkes I.A."/>
            <person name="Baker A."/>
        </authorList>
    </citation>
    <scope>FUNCTION</scope>
    <scope>TISSUE SPECIFICITY</scope>
    <scope>SUBCELLULAR LOCATION</scope>
    <scope>SUBUNIT</scope>
</reference>
<reference key="5">
    <citation type="journal article" date="2007" name="Plant Cell Physiol.">
        <title>Functional classification of Arabidopsis peroxisome biogenesis factors proposed from analyses of knockdown mutants.</title>
        <authorList>
            <person name="Nito K."/>
            <person name="Kamigaki A."/>
            <person name="Kondo M."/>
            <person name="Hayashi M."/>
            <person name="Nishimura M."/>
        </authorList>
    </citation>
    <scope>FUNCTION</scope>
    <scope>IDENTIFICATION</scope>
</reference>
<gene>
    <name type="primary">PEX19-2</name>
    <name type="ordered locus">At5g17550</name>
    <name type="ORF">K10A8.30</name>
</gene>
<protein>
    <recommendedName>
        <fullName>Peroxisome biogenesis protein 19-2</fullName>
    </recommendedName>
    <alternativeName>
        <fullName>Peroxin-19-2</fullName>
        <shortName>AtPEX19-2</shortName>
    </alternativeName>
    <alternativeName>
        <fullName>Peroxisomal membrane protein import receptor PEX19-2</fullName>
    </alternativeName>
</protein>
<evidence type="ECO:0000250" key="1"/>
<evidence type="ECO:0000256" key="2">
    <source>
        <dbReference type="SAM" id="MobiDB-lite"/>
    </source>
</evidence>
<evidence type="ECO:0000269" key="3">
    <source>
    </source>
</evidence>
<evidence type="ECO:0000269" key="4">
    <source>
    </source>
</evidence>
<evidence type="ECO:0000305" key="5"/>
<evidence type="ECO:0000305" key="6">
    <source>
    </source>
</evidence>
<dbReference type="EMBL" id="AL391151">
    <property type="protein sequence ID" value="CAC01899.1"/>
    <property type="status" value="ALT_SEQ"/>
    <property type="molecule type" value="Genomic_DNA"/>
</dbReference>
<dbReference type="EMBL" id="CP002688">
    <property type="protein sequence ID" value="AED92442.1"/>
    <property type="molecule type" value="Genomic_DNA"/>
</dbReference>
<dbReference type="EMBL" id="AF410297">
    <property type="protein sequence ID" value="AAK95283.1"/>
    <property type="molecule type" value="mRNA"/>
</dbReference>
<dbReference type="EMBL" id="AY149931">
    <property type="protein sequence ID" value="AAN31085.1"/>
    <property type="molecule type" value="mRNA"/>
</dbReference>
<dbReference type="PIR" id="T51459">
    <property type="entry name" value="T51459"/>
</dbReference>
<dbReference type="RefSeq" id="NP_568351.1">
    <property type="nucleotide sequence ID" value="NM_121761.3"/>
</dbReference>
<dbReference type="SMR" id="Q94EI3"/>
<dbReference type="BioGRID" id="16897">
    <property type="interactions" value="1"/>
</dbReference>
<dbReference type="FunCoup" id="Q94EI3">
    <property type="interactions" value="3597"/>
</dbReference>
<dbReference type="IntAct" id="Q94EI3">
    <property type="interactions" value="1"/>
</dbReference>
<dbReference type="MINT" id="Q94EI3"/>
<dbReference type="STRING" id="3702.Q94EI3"/>
<dbReference type="iPTMnet" id="Q94EI3"/>
<dbReference type="PaxDb" id="3702-AT5G17550.1"/>
<dbReference type="ProteomicsDB" id="236807"/>
<dbReference type="EnsemblPlants" id="AT5G17550.1">
    <property type="protein sequence ID" value="AT5G17550.1"/>
    <property type="gene ID" value="AT5G17550"/>
</dbReference>
<dbReference type="GeneID" id="831621"/>
<dbReference type="Gramene" id="AT5G17550.1">
    <property type="protein sequence ID" value="AT5G17550.1"/>
    <property type="gene ID" value="AT5G17550"/>
</dbReference>
<dbReference type="KEGG" id="ath:AT5G17550"/>
<dbReference type="Araport" id="AT5G17550"/>
<dbReference type="TAIR" id="AT5G17550">
    <property type="gene designation" value="PEX19-2"/>
</dbReference>
<dbReference type="eggNOG" id="KOG3133">
    <property type="taxonomic scope" value="Eukaryota"/>
</dbReference>
<dbReference type="HOGENOM" id="CLU_043063_4_0_1"/>
<dbReference type="InParanoid" id="Q94EI3"/>
<dbReference type="OMA" id="PMMEDWV"/>
<dbReference type="OrthoDB" id="21292at2759"/>
<dbReference type="PhylomeDB" id="Q94EI3"/>
<dbReference type="PRO" id="PR:Q94EI3"/>
<dbReference type="Proteomes" id="UP000006548">
    <property type="component" value="Chromosome 5"/>
</dbReference>
<dbReference type="ExpressionAtlas" id="Q94EI3">
    <property type="expression patterns" value="baseline and differential"/>
</dbReference>
<dbReference type="GO" id="GO:0005829">
    <property type="term" value="C:cytosol"/>
    <property type="evidence" value="ECO:0000314"/>
    <property type="project" value="TAIR"/>
</dbReference>
<dbReference type="GO" id="GO:0005778">
    <property type="term" value="C:peroxisomal membrane"/>
    <property type="evidence" value="ECO:0007669"/>
    <property type="project" value="UniProtKB-SubCell"/>
</dbReference>
<dbReference type="GO" id="GO:0007031">
    <property type="term" value="P:peroxisome organization"/>
    <property type="evidence" value="ECO:0000315"/>
    <property type="project" value="TAIR"/>
</dbReference>
<dbReference type="GO" id="GO:0006625">
    <property type="term" value="P:protein targeting to peroxisome"/>
    <property type="evidence" value="ECO:0000316"/>
    <property type="project" value="TAIR"/>
</dbReference>
<dbReference type="GO" id="GO:0015031">
    <property type="term" value="P:protein transport"/>
    <property type="evidence" value="ECO:0007669"/>
    <property type="project" value="UniProtKB-KW"/>
</dbReference>
<dbReference type="FunFam" id="1.20.120.900:FF:000002">
    <property type="entry name" value="Peroxisome biogenesis protein 19-2"/>
    <property type="match status" value="1"/>
</dbReference>
<dbReference type="Gene3D" id="1.20.120.900">
    <property type="entry name" value="Pex19, mPTS binding domain"/>
    <property type="match status" value="1"/>
</dbReference>
<dbReference type="InterPro" id="IPR006708">
    <property type="entry name" value="Pex19"/>
</dbReference>
<dbReference type="InterPro" id="IPR038322">
    <property type="entry name" value="Pex19_C_sf"/>
</dbReference>
<dbReference type="PANTHER" id="PTHR12774">
    <property type="entry name" value="PEROXISOMAL BIOGENESIS FACTOR 19"/>
    <property type="match status" value="1"/>
</dbReference>
<dbReference type="PANTHER" id="PTHR12774:SF2">
    <property type="entry name" value="PEROXISOMAL BIOGENESIS FACTOR 19"/>
    <property type="match status" value="1"/>
</dbReference>
<dbReference type="Pfam" id="PF04614">
    <property type="entry name" value="Pex19"/>
    <property type="match status" value="1"/>
</dbReference>
<feature type="chain" id="PRO_0000404532" description="Peroxisome biogenesis protein 19-2">
    <location>
        <begin position="1"/>
        <end position="242"/>
    </location>
</feature>
<feature type="propeptide" id="PRO_0000404533" description="Removed in mature form" evidence="1">
    <location>
        <begin position="243"/>
        <end position="245"/>
    </location>
</feature>
<feature type="region of interest" description="Disordered" evidence="2">
    <location>
        <begin position="17"/>
        <end position="106"/>
    </location>
</feature>
<feature type="compositionally biased region" description="Basic and acidic residues" evidence="2">
    <location>
        <begin position="33"/>
        <end position="44"/>
    </location>
</feature>
<feature type="compositionally biased region" description="Basic and acidic residues" evidence="2">
    <location>
        <begin position="71"/>
        <end position="92"/>
    </location>
</feature>
<feature type="compositionally biased region" description="Polar residues" evidence="2">
    <location>
        <begin position="96"/>
        <end position="105"/>
    </location>
</feature>
<feature type="modified residue" description="Cysteine methyl ester" evidence="1">
    <location>
        <position position="242"/>
    </location>
</feature>
<feature type="lipid moiety-binding region" description="S-farnesyl cysteine" evidence="1">
    <location>
        <position position="242"/>
    </location>
</feature>
<organism>
    <name type="scientific">Arabidopsis thaliana</name>
    <name type="common">Mouse-ear cress</name>
    <dbReference type="NCBI Taxonomy" id="3702"/>
    <lineage>
        <taxon>Eukaryota</taxon>
        <taxon>Viridiplantae</taxon>
        <taxon>Streptophyta</taxon>
        <taxon>Embryophyta</taxon>
        <taxon>Tracheophyta</taxon>
        <taxon>Spermatophyta</taxon>
        <taxon>Magnoliopsida</taxon>
        <taxon>eudicotyledons</taxon>
        <taxon>Gunneridae</taxon>
        <taxon>Pentapetalae</taxon>
        <taxon>rosids</taxon>
        <taxon>malvids</taxon>
        <taxon>Brassicales</taxon>
        <taxon>Brassicaceae</taxon>
        <taxon>Camelineae</taxon>
        <taxon>Arabidopsis</taxon>
    </lineage>
</organism>